<accession>P03448</accession>
<organismHost>
    <name type="scientific">Aves</name>
    <dbReference type="NCBI Taxonomy" id="8782"/>
</organismHost>
<name>HEMA_I72A5</name>
<keyword id="KW-1167">Clathrin- and caveolin-independent endocytosis of virus by host</keyword>
<keyword id="KW-1165">Clathrin-mediated endocytosis of virus by host</keyword>
<keyword id="KW-1015">Disulfide bond</keyword>
<keyword id="KW-1170">Fusion of virus membrane with host endosomal membrane</keyword>
<keyword id="KW-1168">Fusion of virus membrane with host membrane</keyword>
<keyword id="KW-0325">Glycoprotein</keyword>
<keyword id="KW-0348">Hemagglutinin</keyword>
<keyword id="KW-1032">Host cell membrane</keyword>
<keyword id="KW-1043">Host membrane</keyword>
<keyword id="KW-0945">Host-virus interaction</keyword>
<keyword id="KW-0449">Lipoprotein</keyword>
<keyword id="KW-0472">Membrane</keyword>
<keyword id="KW-0564">Palmitate</keyword>
<keyword id="KW-0732">Signal</keyword>
<keyword id="KW-0812">Transmembrane</keyword>
<keyword id="KW-1133">Transmembrane helix</keyword>
<keyword id="KW-1161">Viral attachment to host cell</keyword>
<keyword id="KW-0261">Viral envelope protein</keyword>
<keyword id="KW-1162">Viral penetration into host cytoplasm</keyword>
<keyword id="KW-0946">Virion</keyword>
<keyword id="KW-1164">Virus endocytosis by host</keyword>
<keyword id="KW-1160">Virus entry into host cell</keyword>
<proteinExistence type="inferred from homology"/>
<sequence length="566" mass="63393">MIAIIVVAILATAGRSDKICIGYHANNSTTQIDTILEKNVTVTHSVELLENQKEERFCKILKKAPLDLKGCTIEGWILGNPQCDLLLGDQSWSYIVERPTAQNGICYPGVLNEVEELKALIGSGERVERFEMFPKSTWTGVDTSSGVTRACPYNSGSSFYRNLLWIIKTKSAAYSVIKGAYNNTGNQPILYFWGVHHPPDTNEQNTLYGSGDRYVRMGTESMNFAKSPEIAARPAVNGQRGRIDYYWSILKPGETLNVESNGNLIAPWYAFRFVSTSNKGAVFKSNLPIENCDATCQTVAGVLRTNKTFQNVSPLWIGECPKYVKSESLRLATGLRNVPQIETRGLFGAIAGFIEGGWTGMIDGWYGYHHENSQGSGYAADRESTQKAVDGITNKVNSIIDKMNTQFEAVDHEFSNLERRIDNLNKRMEDGFLDVWTYNAELLVLLENERTLDLHDANVKNLYERVKSQLRDNAMILGNGCFEFWHKCDDECMESVKNGTYDYPKYQDESKLNRQEIESVKLESLGVYQILAIYSTVSSSLVLVGLIIAVGLWMCSNGSMQCRICI</sequence>
<reference key="1">
    <citation type="journal article" date="1991" name="Virology">
        <title>Comparison of complete amino acid sequences and receptor-binding properties among 13 serotypes of hemagglutinins of influenza A viruses.</title>
        <authorList>
            <person name="Nobusawa E."/>
            <person name="Aoyama T."/>
            <person name="Kato H."/>
            <person name="Suzuki Y."/>
            <person name="Tateno Y."/>
            <person name="Nakajima K."/>
        </authorList>
    </citation>
    <scope>NUCLEOTIDE SEQUENCE [GENOMIC RNA]</scope>
</reference>
<reference key="2">
    <citation type="journal article" date="1981" name="Proc. Natl. Acad. Sci. U.S.A.">
        <title>Sequence relationships among the hemagglutinin genes of 12 subtypes of influenza A virus.</title>
        <authorList>
            <person name="Air G.M."/>
        </authorList>
    </citation>
    <scope>NUCLEOTIDE SEQUENCE [GENOMIC RNA] OF 1-97</scope>
</reference>
<comment type="function">
    <text>Binds to sialic acid-containing receptors on the cell surface, bringing about the attachment of the virus particle to the cell. This attachment induces virion internalization of about two third of the virus particles through clathrin-dependent endocytosis and about one third through a clathrin- and caveolin-independent pathway. Plays a major role in the determination of host range restriction and virulence. Class I viral fusion protein. Responsible for penetration of the virus into the cell cytoplasm by mediating the fusion of the membrane of the endocytosed virus particle with the endosomal membrane. Low pH in endosomes induces an irreversible conformational change in HA2, releasing the fusion hydrophobic peptide. Several trimers are required to form a competent fusion pore.</text>
</comment>
<comment type="function">
    <text evidence="1">Binds to sialic acid-containing receptors on the cell surface, bringing about the attachment of the virus particle to the cell. This attachment induces virion internalization either through clathrin-dependent endocytosis or through clathrin- and caveolin-independent pathway. Plays a major role in the determination of host range restriction and virulence. Class I viral fusion protein. Responsible for penetration of the virus into the cell cytoplasm by mediating the fusion of the membrane of the endocytosed virus particle with the endosomal membrane. Low pH in endosomes induces an irreversible conformational change in HA2, releasing the fusion hydrophobic peptide. Several trimers are required to form a competent fusion pore.</text>
</comment>
<comment type="subunit">
    <text evidence="1">Homotrimer of disulfide-linked HA1-HA2.</text>
</comment>
<comment type="subcellular location">
    <subcellularLocation>
        <location evidence="1">Virion membrane</location>
        <topology evidence="1">Single-pass type I membrane protein</topology>
    </subcellularLocation>
    <subcellularLocation>
        <location evidence="1">Host apical cell membrane</location>
        <topology evidence="1">Single-pass type I membrane protein</topology>
    </subcellularLocation>
    <text evidence="1">Targeted to the apical plasma membrane in epithelial polarized cells through a signal present in the transmembrane domain. Associated with glycosphingolipid- and cholesterol-enriched detergent-resistant lipid rafts.</text>
</comment>
<comment type="PTM">
    <text evidence="1">Palmitoylated.</text>
</comment>
<comment type="PTM">
    <text evidence="1">In natural infection, inactive HA is matured into HA1 and HA2 outside the cell by one or more trypsin-like, arginine-specific endoprotease secreted by the bronchial epithelial cells. One identified protease that may be involved in this process is secreted in lungs by club cells.</text>
</comment>
<comment type="miscellaneous">
    <text>Major glycoprotein, comprises over 80% of the envelope proteins present in virus particle.</text>
</comment>
<comment type="miscellaneous">
    <text>The extent of infection into host organism is determined by HA. Influenza viruses bud from the apical surface of polarized epithelial cells (e.g. bronchial epithelial cells) into lumen of lungs and are therefore usually pneumotropic. The reason is that HA is cleaved by tryptase clara which is restricted to lungs. However, HAs of H5 and H7 pantropic avian viruses subtypes can be cleaved by furin and subtilisin-type enzymes, allowing the virus to grow in other organs than lungs.</text>
</comment>
<comment type="miscellaneous">
    <text evidence="2">The influenza A genome consist of 8 RNA segments. Genetic variation of hemagglutinin and/or neuraminidase genes results in the emergence of new influenza strains. The mechanism of variation can be the result of point mutations or the result of genetic reassortment between segments of two different strains.</text>
</comment>
<comment type="similarity">
    <text evidence="1">Belongs to the influenza viruses hemagglutinin family.</text>
</comment>
<dbReference type="EMBL" id="D90303">
    <property type="protein sequence ID" value="BAA14333.1"/>
    <property type="molecule type" value="Genomic_RNA"/>
</dbReference>
<dbReference type="EMBL" id="J02158">
    <property type="protein sequence ID" value="AAA43198.1"/>
    <property type="molecule type" value="Genomic_RNA"/>
</dbReference>
<dbReference type="PIR" id="A04059">
    <property type="entry name" value="HMIVH6"/>
</dbReference>
<dbReference type="SMR" id="P03448"/>
<dbReference type="GlyCosmos" id="P03448">
    <property type="glycosylation" value="6 sites, No reported glycans"/>
</dbReference>
<dbReference type="PRO" id="PR:P03448"/>
<dbReference type="Proteomes" id="UP000157292">
    <property type="component" value="Genome"/>
</dbReference>
<dbReference type="GO" id="GO:0020002">
    <property type="term" value="C:host cell plasma membrane"/>
    <property type="evidence" value="ECO:0007669"/>
    <property type="project" value="UniProtKB-SubCell"/>
</dbReference>
<dbReference type="GO" id="GO:0016020">
    <property type="term" value="C:membrane"/>
    <property type="evidence" value="ECO:0007669"/>
    <property type="project" value="UniProtKB-UniRule"/>
</dbReference>
<dbReference type="GO" id="GO:0019031">
    <property type="term" value="C:viral envelope"/>
    <property type="evidence" value="ECO:0007669"/>
    <property type="project" value="UniProtKB-UniRule"/>
</dbReference>
<dbReference type="GO" id="GO:0055036">
    <property type="term" value="C:virion membrane"/>
    <property type="evidence" value="ECO:0007669"/>
    <property type="project" value="UniProtKB-SubCell"/>
</dbReference>
<dbReference type="GO" id="GO:0046789">
    <property type="term" value="F:host cell surface receptor binding"/>
    <property type="evidence" value="ECO:0007669"/>
    <property type="project" value="UniProtKB-UniRule"/>
</dbReference>
<dbReference type="GO" id="GO:0075512">
    <property type="term" value="P:clathrin-dependent endocytosis of virus by host cell"/>
    <property type="evidence" value="ECO:0007669"/>
    <property type="project" value="UniProtKB-UniRule"/>
</dbReference>
<dbReference type="GO" id="GO:0039654">
    <property type="term" value="P:fusion of virus membrane with host endosome membrane"/>
    <property type="evidence" value="ECO:0007669"/>
    <property type="project" value="UniProtKB-UniRule"/>
</dbReference>
<dbReference type="GO" id="GO:0019064">
    <property type="term" value="P:fusion of virus membrane with host plasma membrane"/>
    <property type="evidence" value="ECO:0007669"/>
    <property type="project" value="InterPro"/>
</dbReference>
<dbReference type="GO" id="GO:0046761">
    <property type="term" value="P:viral budding from plasma membrane"/>
    <property type="evidence" value="ECO:0007669"/>
    <property type="project" value="UniProtKB-UniRule"/>
</dbReference>
<dbReference type="GO" id="GO:0019062">
    <property type="term" value="P:virion attachment to host cell"/>
    <property type="evidence" value="ECO:0007669"/>
    <property type="project" value="UniProtKB-KW"/>
</dbReference>
<dbReference type="Gene3D" id="3.90.20.10">
    <property type="match status" value="1"/>
</dbReference>
<dbReference type="Gene3D" id="3.90.209.20">
    <property type="match status" value="1"/>
</dbReference>
<dbReference type="Gene3D" id="2.10.77.10">
    <property type="entry name" value="Hemagglutinin Chain A, Domain 2"/>
    <property type="match status" value="1"/>
</dbReference>
<dbReference type="HAMAP" id="MF_04072">
    <property type="entry name" value="INFV_HEMA"/>
    <property type="match status" value="1"/>
</dbReference>
<dbReference type="InterPro" id="IPR008980">
    <property type="entry name" value="Capsid_hemagglutn"/>
</dbReference>
<dbReference type="InterPro" id="IPR013828">
    <property type="entry name" value="Hemagglutn_HA1_a/b_dom_sf"/>
</dbReference>
<dbReference type="InterPro" id="IPR000149">
    <property type="entry name" value="Hemagglutn_influenz_A"/>
</dbReference>
<dbReference type="InterPro" id="IPR001364">
    <property type="entry name" value="Hemagglutn_influenz_A/B"/>
</dbReference>
<dbReference type="Pfam" id="PF00509">
    <property type="entry name" value="Hemagglutinin"/>
    <property type="match status" value="1"/>
</dbReference>
<dbReference type="PRINTS" id="PR00330">
    <property type="entry name" value="HEMAGGLUTN1"/>
</dbReference>
<dbReference type="PRINTS" id="PR00329">
    <property type="entry name" value="HEMAGGLUTN12"/>
</dbReference>
<dbReference type="SUPFAM" id="SSF58064">
    <property type="entry name" value="Influenza hemagglutinin (stalk)"/>
    <property type="match status" value="1"/>
</dbReference>
<dbReference type="SUPFAM" id="SSF49818">
    <property type="entry name" value="Viral protein domain"/>
    <property type="match status" value="1"/>
</dbReference>
<organism>
    <name type="scientific">Influenza A virus (strain A/Shearwater/Australia/1972 H6N5)</name>
    <dbReference type="NCBI Taxonomy" id="383604"/>
    <lineage>
        <taxon>Viruses</taxon>
        <taxon>Riboviria</taxon>
        <taxon>Orthornavirae</taxon>
        <taxon>Negarnaviricota</taxon>
        <taxon>Polyploviricotina</taxon>
        <taxon>Insthoviricetes</taxon>
        <taxon>Articulavirales</taxon>
        <taxon>Orthomyxoviridae</taxon>
        <taxon>Alphainfluenzavirus</taxon>
        <taxon>Alphainfluenzavirus influenzae</taxon>
        <taxon>Influenza A virus</taxon>
    </lineage>
</organism>
<gene>
    <name evidence="1" type="primary">HA</name>
</gene>
<feature type="signal peptide" evidence="1">
    <location>
        <begin position="1"/>
        <end position="16"/>
    </location>
</feature>
<feature type="chain" id="PRO_0000440432" description="Hemagglutinin" evidence="1">
    <location>
        <begin position="17"/>
        <end position="566"/>
    </location>
</feature>
<feature type="chain" id="PRO_0000039042" description="Hemagglutinin HA1 chain" evidence="1">
    <location>
        <begin position="17"/>
        <end position="343"/>
    </location>
</feature>
<feature type="chain" id="PRO_0000039043" description="Hemagglutinin HA2 chain" evidence="1">
    <location>
        <begin position="345"/>
        <end position="566"/>
    </location>
</feature>
<feature type="topological domain" description="Extracellular" evidence="1">
    <location>
        <begin position="17"/>
        <end position="529"/>
    </location>
</feature>
<feature type="transmembrane region" description="Helical" evidence="1">
    <location>
        <begin position="530"/>
        <end position="550"/>
    </location>
</feature>
<feature type="topological domain" description="Cytoplasmic" evidence="1">
    <location>
        <begin position="551"/>
        <end position="566"/>
    </location>
</feature>
<feature type="site" description="Cleavage; by host" evidence="1">
    <location>
        <begin position="344"/>
        <end position="345"/>
    </location>
</feature>
<feature type="lipid moiety-binding region" description="S-palmitoyl cysteine; by host" evidence="1">
    <location>
        <position position="555"/>
    </location>
</feature>
<feature type="lipid moiety-binding region" description="S-palmitoyl cysteine; by host" evidence="1">
    <location>
        <position position="562"/>
    </location>
</feature>
<feature type="lipid moiety-binding region" description="S-palmitoyl cysteine; by host" evidence="1">
    <location>
        <position position="565"/>
    </location>
</feature>
<feature type="glycosylation site" description="N-linked (GlcNAc...) asparagine; by host" evidence="1">
    <location>
        <position position="26"/>
    </location>
</feature>
<feature type="glycosylation site" description="N-linked (GlcNAc...) asparagine; by host" evidence="1">
    <location>
        <position position="27"/>
    </location>
</feature>
<feature type="glycosylation site" description="N-linked (GlcNAc...) asparagine; by host" evidence="1">
    <location>
        <position position="39"/>
    </location>
</feature>
<feature type="glycosylation site" description="N-linked (GlcNAc...) asparagine; by host" evidence="1">
    <location>
        <position position="182"/>
    </location>
</feature>
<feature type="glycosylation site" description="N-linked (GlcNAc...) asparagine; by host" evidence="1">
    <location>
        <position position="306"/>
    </location>
</feature>
<feature type="glycosylation site" description="N-linked (GlcNAc...) asparagine; by host" evidence="1">
    <location>
        <position position="498"/>
    </location>
</feature>
<feature type="disulfide bond" description="Interchain (between HA1 and HA2 chains)" evidence="1">
    <location>
        <begin position="20"/>
        <end position="481"/>
    </location>
</feature>
<feature type="disulfide bond" evidence="1">
    <location>
        <begin position="58"/>
        <end position="292"/>
    </location>
</feature>
<feature type="disulfide bond" evidence="1">
    <location>
        <begin position="71"/>
        <end position="83"/>
    </location>
</feature>
<feature type="disulfide bond" evidence="1">
    <location>
        <begin position="106"/>
        <end position="151"/>
    </location>
</feature>
<feature type="disulfide bond" evidence="1">
    <location>
        <begin position="296"/>
        <end position="320"/>
    </location>
</feature>
<feature type="disulfide bond" evidence="1">
    <location>
        <begin position="488"/>
        <end position="492"/>
    </location>
</feature>
<feature type="sequence conflict" description="In Ref. 2; AAA43198." evidence="2" ref="2">
    <original>GDQS</original>
    <variation>SVPE</variation>
    <location>
        <begin position="88"/>
        <end position="91"/>
    </location>
</feature>
<evidence type="ECO:0000255" key="1">
    <source>
        <dbReference type="HAMAP-Rule" id="MF_04072"/>
    </source>
</evidence>
<evidence type="ECO:0000305" key="2"/>
<protein>
    <recommendedName>
        <fullName evidence="1">Hemagglutinin</fullName>
    </recommendedName>
    <component>
        <recommendedName>
            <fullName evidence="1">Hemagglutinin HA1 chain</fullName>
        </recommendedName>
    </component>
    <component>
        <recommendedName>
            <fullName evidence="1">Hemagglutinin HA2 chain</fullName>
        </recommendedName>
    </component>
</protein>